<gene>
    <name evidence="1" type="primary">rimM</name>
    <name type="ordered locus">stu1419</name>
</gene>
<reference key="1">
    <citation type="journal article" date="2004" name="Nat. Biotechnol.">
        <title>Complete sequence and comparative genome analysis of the dairy bacterium Streptococcus thermophilus.</title>
        <authorList>
            <person name="Bolotin A."/>
            <person name="Quinquis B."/>
            <person name="Renault P."/>
            <person name="Sorokin A."/>
            <person name="Ehrlich S.D."/>
            <person name="Kulakauskas S."/>
            <person name="Lapidus A."/>
            <person name="Goltsman E."/>
            <person name="Mazur M."/>
            <person name="Pusch G.D."/>
            <person name="Fonstein M."/>
            <person name="Overbeek R."/>
            <person name="Kyprides N."/>
            <person name="Purnelle B."/>
            <person name="Prozzi D."/>
            <person name="Ngui K."/>
            <person name="Masuy D."/>
            <person name="Hancy F."/>
            <person name="Burteau S."/>
            <person name="Boutry M."/>
            <person name="Delcour J."/>
            <person name="Goffeau A."/>
            <person name="Hols P."/>
        </authorList>
    </citation>
    <scope>NUCLEOTIDE SEQUENCE [LARGE SCALE GENOMIC DNA]</scope>
    <source>
        <strain>ATCC BAA-250 / LMG 18311</strain>
    </source>
</reference>
<protein>
    <recommendedName>
        <fullName evidence="1">Ribosome maturation factor RimM</fullName>
    </recommendedName>
</protein>
<dbReference type="EMBL" id="CP000023">
    <property type="protein sequence ID" value="AAV61032.1"/>
    <property type="molecule type" value="Genomic_DNA"/>
</dbReference>
<dbReference type="RefSeq" id="WP_011226286.1">
    <property type="nucleotide sequence ID" value="NC_006448.1"/>
</dbReference>
<dbReference type="SMR" id="Q5M3J4"/>
<dbReference type="STRING" id="264199.stu1419"/>
<dbReference type="GeneID" id="66899179"/>
<dbReference type="KEGG" id="stl:stu1419"/>
<dbReference type="eggNOG" id="COG0806">
    <property type="taxonomic scope" value="Bacteria"/>
</dbReference>
<dbReference type="HOGENOM" id="CLU_077636_3_1_9"/>
<dbReference type="Proteomes" id="UP000001170">
    <property type="component" value="Chromosome"/>
</dbReference>
<dbReference type="GO" id="GO:0005737">
    <property type="term" value="C:cytoplasm"/>
    <property type="evidence" value="ECO:0007669"/>
    <property type="project" value="UniProtKB-SubCell"/>
</dbReference>
<dbReference type="GO" id="GO:0005840">
    <property type="term" value="C:ribosome"/>
    <property type="evidence" value="ECO:0007669"/>
    <property type="project" value="InterPro"/>
</dbReference>
<dbReference type="GO" id="GO:0043022">
    <property type="term" value="F:ribosome binding"/>
    <property type="evidence" value="ECO:0007669"/>
    <property type="project" value="InterPro"/>
</dbReference>
<dbReference type="GO" id="GO:0042274">
    <property type="term" value="P:ribosomal small subunit biogenesis"/>
    <property type="evidence" value="ECO:0007669"/>
    <property type="project" value="UniProtKB-UniRule"/>
</dbReference>
<dbReference type="GO" id="GO:0006364">
    <property type="term" value="P:rRNA processing"/>
    <property type="evidence" value="ECO:0007669"/>
    <property type="project" value="UniProtKB-UniRule"/>
</dbReference>
<dbReference type="Gene3D" id="2.30.30.240">
    <property type="entry name" value="PRC-barrel domain"/>
    <property type="match status" value="1"/>
</dbReference>
<dbReference type="Gene3D" id="2.40.30.60">
    <property type="entry name" value="RimM"/>
    <property type="match status" value="1"/>
</dbReference>
<dbReference type="HAMAP" id="MF_00014">
    <property type="entry name" value="Ribosome_mat_RimM"/>
    <property type="match status" value="1"/>
</dbReference>
<dbReference type="InterPro" id="IPR027275">
    <property type="entry name" value="PRC-brl_dom"/>
</dbReference>
<dbReference type="InterPro" id="IPR011033">
    <property type="entry name" value="PRC_barrel-like_sf"/>
</dbReference>
<dbReference type="InterPro" id="IPR011961">
    <property type="entry name" value="RimM"/>
</dbReference>
<dbReference type="InterPro" id="IPR002676">
    <property type="entry name" value="RimM_N"/>
</dbReference>
<dbReference type="InterPro" id="IPR036976">
    <property type="entry name" value="RimM_N_sf"/>
</dbReference>
<dbReference type="InterPro" id="IPR009000">
    <property type="entry name" value="Transl_B-barrel_sf"/>
</dbReference>
<dbReference type="NCBIfam" id="TIGR02273">
    <property type="entry name" value="16S_RimM"/>
    <property type="match status" value="1"/>
</dbReference>
<dbReference type="PANTHER" id="PTHR33692">
    <property type="entry name" value="RIBOSOME MATURATION FACTOR RIMM"/>
    <property type="match status" value="1"/>
</dbReference>
<dbReference type="PANTHER" id="PTHR33692:SF1">
    <property type="entry name" value="RIBOSOME MATURATION FACTOR RIMM"/>
    <property type="match status" value="1"/>
</dbReference>
<dbReference type="Pfam" id="PF05239">
    <property type="entry name" value="PRC"/>
    <property type="match status" value="1"/>
</dbReference>
<dbReference type="Pfam" id="PF01782">
    <property type="entry name" value="RimM"/>
    <property type="match status" value="1"/>
</dbReference>
<dbReference type="SUPFAM" id="SSF50346">
    <property type="entry name" value="PRC-barrel domain"/>
    <property type="match status" value="1"/>
</dbReference>
<dbReference type="SUPFAM" id="SSF50447">
    <property type="entry name" value="Translation proteins"/>
    <property type="match status" value="1"/>
</dbReference>
<proteinExistence type="inferred from homology"/>
<evidence type="ECO:0000255" key="1">
    <source>
        <dbReference type="HAMAP-Rule" id="MF_00014"/>
    </source>
</evidence>
<accession>Q5M3J4</accession>
<keyword id="KW-0143">Chaperone</keyword>
<keyword id="KW-0963">Cytoplasm</keyword>
<keyword id="KW-1185">Reference proteome</keyword>
<keyword id="KW-0690">Ribosome biogenesis</keyword>
<keyword id="KW-0698">rRNA processing</keyword>
<feature type="chain" id="PRO_0000163372" description="Ribosome maturation factor RimM">
    <location>
        <begin position="1"/>
        <end position="172"/>
    </location>
</feature>
<feature type="domain" description="PRC barrel" evidence="1">
    <location>
        <begin position="96"/>
        <end position="168"/>
    </location>
</feature>
<name>RIMM_STRT2</name>
<comment type="function">
    <text evidence="1">An accessory protein needed during the final step in the assembly of 30S ribosomal subunit, possibly for assembly of the head region. Essential for efficient processing of 16S rRNA. May be needed both before and after RbfA during the maturation of 16S rRNA. It has affinity for free ribosomal 30S subunits but not for 70S ribosomes.</text>
</comment>
<comment type="subunit">
    <text evidence="1">Binds ribosomal protein uS19.</text>
</comment>
<comment type="subcellular location">
    <subcellularLocation>
        <location evidence="1">Cytoplasm</location>
    </subcellularLocation>
</comment>
<comment type="domain">
    <text evidence="1">The PRC barrel domain binds ribosomal protein uS19.</text>
</comment>
<comment type="similarity">
    <text evidence="1">Belongs to the RimM family.</text>
</comment>
<organism>
    <name type="scientific">Streptococcus thermophilus (strain ATCC BAA-250 / LMG 18311)</name>
    <dbReference type="NCBI Taxonomy" id="264199"/>
    <lineage>
        <taxon>Bacteria</taxon>
        <taxon>Bacillati</taxon>
        <taxon>Bacillota</taxon>
        <taxon>Bacilli</taxon>
        <taxon>Lactobacillales</taxon>
        <taxon>Streptococcaceae</taxon>
        <taxon>Streptococcus</taxon>
    </lineage>
</organism>
<sequence length="172" mass="19627">MTYYNVGKIVNTQGLQGELRVLSVTDFADERFKKKSVLALFDDKDNYIMDVEVASHRKHKNFDIVKFKGLYHINDVEKYKGCSLKIAEENLTDLDDGEFYYHEIIGLDVYEGNTLIGQVKEILQPGANDVWVVKRKGKKDLLLPYIPPVVLDVDVAAGRIEVELMEGLDDED</sequence>